<keyword id="KW-0342">GTP-binding</keyword>
<keyword id="KW-0547">Nucleotide-binding</keyword>
<keyword id="KW-0677">Repeat</keyword>
<keyword id="KW-0690">Ribosome biogenesis</keyword>
<organism>
    <name type="scientific">Chlamydia trachomatis serovar L2b (strain UCH-1/proctitis)</name>
    <dbReference type="NCBI Taxonomy" id="471473"/>
    <lineage>
        <taxon>Bacteria</taxon>
        <taxon>Pseudomonadati</taxon>
        <taxon>Chlamydiota</taxon>
        <taxon>Chlamydiia</taxon>
        <taxon>Chlamydiales</taxon>
        <taxon>Chlamydiaceae</taxon>
        <taxon>Chlamydia/Chlamydophila group</taxon>
        <taxon>Chlamydia</taxon>
    </lineage>
</organism>
<reference key="1">
    <citation type="journal article" date="2008" name="Genome Res.">
        <title>Chlamydia trachomatis: genome sequence analysis of lymphogranuloma venereum isolates.</title>
        <authorList>
            <person name="Thomson N.R."/>
            <person name="Holden M.T.G."/>
            <person name="Carder C."/>
            <person name="Lennard N."/>
            <person name="Lockey S.J."/>
            <person name="Marsh P."/>
            <person name="Skipp P."/>
            <person name="O'Connor C.D."/>
            <person name="Goodhead I."/>
            <person name="Norbertzcak H."/>
            <person name="Harris B."/>
            <person name="Ormond D."/>
            <person name="Rance R."/>
            <person name="Quail M.A."/>
            <person name="Parkhill J."/>
            <person name="Stephens R.S."/>
            <person name="Clarke I.N."/>
        </authorList>
    </citation>
    <scope>NUCLEOTIDE SEQUENCE [LARGE SCALE GENOMIC DNA]</scope>
    <source>
        <strain>UCH-1/proctitis</strain>
    </source>
</reference>
<gene>
    <name evidence="1" type="primary">der</name>
    <name type="synonym">engA</name>
    <name type="ordered locus">CTLon_0072</name>
</gene>
<feature type="chain" id="PRO_1000099106" description="GTPase Der">
    <location>
        <begin position="1"/>
        <end position="490"/>
    </location>
</feature>
<feature type="domain" description="EngA-type G 1">
    <location>
        <begin position="1"/>
        <end position="165"/>
    </location>
</feature>
<feature type="domain" description="EngA-type G 2">
    <location>
        <begin position="227"/>
        <end position="400"/>
    </location>
</feature>
<feature type="domain" description="KH-like" evidence="1">
    <location>
        <begin position="401"/>
        <end position="485"/>
    </location>
</feature>
<feature type="binding site" evidence="1">
    <location>
        <begin position="7"/>
        <end position="14"/>
    </location>
    <ligand>
        <name>GTP</name>
        <dbReference type="ChEBI" id="CHEBI:37565"/>
        <label>1</label>
    </ligand>
</feature>
<feature type="binding site" evidence="1">
    <location>
        <begin position="54"/>
        <end position="58"/>
    </location>
    <ligand>
        <name>GTP</name>
        <dbReference type="ChEBI" id="CHEBI:37565"/>
        <label>1</label>
    </ligand>
</feature>
<feature type="binding site" evidence="1">
    <location>
        <begin position="117"/>
        <end position="120"/>
    </location>
    <ligand>
        <name>GTP</name>
        <dbReference type="ChEBI" id="CHEBI:37565"/>
        <label>1</label>
    </ligand>
</feature>
<feature type="binding site" evidence="1">
    <location>
        <begin position="233"/>
        <end position="240"/>
    </location>
    <ligand>
        <name>GTP</name>
        <dbReference type="ChEBI" id="CHEBI:37565"/>
        <label>2</label>
    </ligand>
</feature>
<feature type="binding site" evidence="1">
    <location>
        <begin position="280"/>
        <end position="284"/>
    </location>
    <ligand>
        <name>GTP</name>
        <dbReference type="ChEBI" id="CHEBI:37565"/>
        <label>2</label>
    </ligand>
</feature>
<feature type="binding site" evidence="1">
    <location>
        <begin position="345"/>
        <end position="348"/>
    </location>
    <ligand>
        <name>GTP</name>
        <dbReference type="ChEBI" id="CHEBI:37565"/>
        <label>2</label>
    </ligand>
</feature>
<accession>B0BAF8</accession>
<protein>
    <recommendedName>
        <fullName evidence="1">GTPase Der</fullName>
    </recommendedName>
    <alternativeName>
        <fullName evidence="1">GTP-binding protein EngA</fullName>
    </alternativeName>
</protein>
<evidence type="ECO:0000255" key="1">
    <source>
        <dbReference type="HAMAP-Rule" id="MF_00195"/>
    </source>
</evidence>
<comment type="function">
    <text evidence="1">GTPase that plays an essential role in the late steps of ribosome biogenesis.</text>
</comment>
<comment type="subunit">
    <text evidence="1">Associates with the 50S ribosomal subunit.</text>
</comment>
<comment type="similarity">
    <text evidence="1">Belongs to the TRAFAC class TrmE-Era-EngA-EngB-Septin-like GTPase superfamily. EngA (Der) GTPase family.</text>
</comment>
<proteinExistence type="inferred from homology"/>
<dbReference type="EMBL" id="AM884177">
    <property type="protein sequence ID" value="CAP06470.1"/>
    <property type="molecule type" value="Genomic_DNA"/>
</dbReference>
<dbReference type="RefSeq" id="WP_009873307.1">
    <property type="nucleotide sequence ID" value="NC_010280.2"/>
</dbReference>
<dbReference type="SMR" id="B0BAF8"/>
<dbReference type="KEGG" id="ctl:CTLon_0072"/>
<dbReference type="HOGENOM" id="CLU_016077_6_2_0"/>
<dbReference type="Proteomes" id="UP001154401">
    <property type="component" value="Chromosome"/>
</dbReference>
<dbReference type="GO" id="GO:0005525">
    <property type="term" value="F:GTP binding"/>
    <property type="evidence" value="ECO:0007669"/>
    <property type="project" value="UniProtKB-UniRule"/>
</dbReference>
<dbReference type="GO" id="GO:0043022">
    <property type="term" value="F:ribosome binding"/>
    <property type="evidence" value="ECO:0007669"/>
    <property type="project" value="TreeGrafter"/>
</dbReference>
<dbReference type="GO" id="GO:0042254">
    <property type="term" value="P:ribosome biogenesis"/>
    <property type="evidence" value="ECO:0007669"/>
    <property type="project" value="UniProtKB-KW"/>
</dbReference>
<dbReference type="CDD" id="cd01894">
    <property type="entry name" value="EngA1"/>
    <property type="match status" value="1"/>
</dbReference>
<dbReference type="CDD" id="cd01895">
    <property type="entry name" value="EngA2"/>
    <property type="match status" value="1"/>
</dbReference>
<dbReference type="FunFam" id="3.40.50.300:FF:000040">
    <property type="entry name" value="GTPase Der"/>
    <property type="match status" value="1"/>
</dbReference>
<dbReference type="Gene3D" id="3.30.300.20">
    <property type="match status" value="1"/>
</dbReference>
<dbReference type="Gene3D" id="3.40.50.300">
    <property type="entry name" value="P-loop containing nucleotide triphosphate hydrolases"/>
    <property type="match status" value="2"/>
</dbReference>
<dbReference type="HAMAP" id="MF_00195">
    <property type="entry name" value="GTPase_Der"/>
    <property type="match status" value="1"/>
</dbReference>
<dbReference type="InterPro" id="IPR031166">
    <property type="entry name" value="G_ENGA"/>
</dbReference>
<dbReference type="InterPro" id="IPR006073">
    <property type="entry name" value="GTP-bd"/>
</dbReference>
<dbReference type="InterPro" id="IPR016484">
    <property type="entry name" value="GTPase_Der"/>
</dbReference>
<dbReference type="InterPro" id="IPR032859">
    <property type="entry name" value="KH_dom-like"/>
</dbReference>
<dbReference type="InterPro" id="IPR015946">
    <property type="entry name" value="KH_dom-like_a/b"/>
</dbReference>
<dbReference type="InterPro" id="IPR027417">
    <property type="entry name" value="P-loop_NTPase"/>
</dbReference>
<dbReference type="InterPro" id="IPR005225">
    <property type="entry name" value="Small_GTP-bd"/>
</dbReference>
<dbReference type="NCBIfam" id="TIGR03594">
    <property type="entry name" value="GTPase_EngA"/>
    <property type="match status" value="1"/>
</dbReference>
<dbReference type="NCBIfam" id="TIGR00231">
    <property type="entry name" value="small_GTP"/>
    <property type="match status" value="2"/>
</dbReference>
<dbReference type="PANTHER" id="PTHR43834">
    <property type="entry name" value="GTPASE DER"/>
    <property type="match status" value="1"/>
</dbReference>
<dbReference type="PANTHER" id="PTHR43834:SF6">
    <property type="entry name" value="GTPASE DER"/>
    <property type="match status" value="1"/>
</dbReference>
<dbReference type="Pfam" id="PF14714">
    <property type="entry name" value="KH_dom-like"/>
    <property type="match status" value="1"/>
</dbReference>
<dbReference type="Pfam" id="PF01926">
    <property type="entry name" value="MMR_HSR1"/>
    <property type="match status" value="2"/>
</dbReference>
<dbReference type="PIRSF" id="PIRSF006485">
    <property type="entry name" value="GTP-binding_EngA"/>
    <property type="match status" value="1"/>
</dbReference>
<dbReference type="PRINTS" id="PR00326">
    <property type="entry name" value="GTP1OBG"/>
</dbReference>
<dbReference type="SUPFAM" id="SSF52540">
    <property type="entry name" value="P-loop containing nucleoside triphosphate hydrolases"/>
    <property type="match status" value="1"/>
</dbReference>
<dbReference type="SUPFAM" id="SSF82653">
    <property type="entry name" value="Probable GTPase Der, C-terminal domain"/>
    <property type="match status" value="1"/>
</dbReference>
<dbReference type="PROSITE" id="PS51712">
    <property type="entry name" value="G_ENGA"/>
    <property type="match status" value="2"/>
</dbReference>
<name>DER_CHLTB</name>
<sequence length="490" mass="55606">MRIAILGRPNVGKSSLFNRLCRRSLAIVNSQEGTTRDRLYGEIRAWDSIIHVIDTGGVDQESTDRFQKQIHQQALAAAEEASVLLLVVDIRCGITKQDEELAKRLLPLKKPLILVMNKADSQQDLQRIHEFYGLGISDMIATSASHDKHIDLLLERIRQIAQIPVPSVEEQDVVQEDELPSEEAAISLHAFADETLFENESLSQEEASFLEELVAQTATPAPVDRPLKVALIGHPNVGKSSIINALLKEERCITDNSPGTTRDNIDVAYTHNNKEYVFIDTAGLRKTKSIKNSVEWMSSSRTEKAISRTDICLLVIDATQQLSYQDKRILSMIARYKKPHVILVNKWDLMFGVRMEHYVQDLRKMDPYIGQAHILCISAKQRRNLLQIFSAIDDIYTIATTKLSTSLVNKVLASAMQRHHPQVINGKRLRIYYAIHKTTTPFTFLLFINSNSLLTKPYELYLKNTLKAAFNLYRVPFDLEYKAKPARKSN</sequence>